<dbReference type="EC" id="5.4.99.7" evidence="1"/>
<dbReference type="EMBL" id="AAHF01000011">
    <property type="protein sequence ID" value="EAL85898.1"/>
    <property type="molecule type" value="Genomic_DNA"/>
</dbReference>
<dbReference type="RefSeq" id="XP_747936.1">
    <property type="nucleotide sequence ID" value="XM_742843.1"/>
</dbReference>
<dbReference type="SMR" id="Q4WES9"/>
<dbReference type="FunCoup" id="Q4WES9">
    <property type="interactions" value="130"/>
</dbReference>
<dbReference type="STRING" id="330879.Q4WES9"/>
<dbReference type="EnsemblFungi" id="EAL85898">
    <property type="protein sequence ID" value="EAL85898"/>
    <property type="gene ID" value="AFUA_5G04080"/>
</dbReference>
<dbReference type="GeneID" id="3505512"/>
<dbReference type="KEGG" id="afm:AFUA_5G04080"/>
<dbReference type="eggNOG" id="KOG0497">
    <property type="taxonomic scope" value="Eukaryota"/>
</dbReference>
<dbReference type="HOGENOM" id="CLU_009074_2_1_1"/>
<dbReference type="InParanoid" id="Q4WES9"/>
<dbReference type="OMA" id="CWARQTI"/>
<dbReference type="OrthoDB" id="21502at2759"/>
<dbReference type="UniPathway" id="UPA00768"/>
<dbReference type="Proteomes" id="UP000002530">
    <property type="component" value="Chromosome 5"/>
</dbReference>
<dbReference type="GO" id="GO:0005789">
    <property type="term" value="C:endoplasmic reticulum membrane"/>
    <property type="evidence" value="ECO:0007669"/>
    <property type="project" value="UniProtKB-SubCell"/>
</dbReference>
<dbReference type="GO" id="GO:0005811">
    <property type="term" value="C:lipid droplet"/>
    <property type="evidence" value="ECO:0000318"/>
    <property type="project" value="GO_Central"/>
</dbReference>
<dbReference type="GO" id="GO:0000250">
    <property type="term" value="F:lanosterol synthase activity"/>
    <property type="evidence" value="ECO:0000318"/>
    <property type="project" value="GO_Central"/>
</dbReference>
<dbReference type="GO" id="GO:0006696">
    <property type="term" value="P:ergosterol biosynthetic process"/>
    <property type="evidence" value="ECO:0000318"/>
    <property type="project" value="GO_Central"/>
</dbReference>
<dbReference type="GO" id="GO:0016104">
    <property type="term" value="P:triterpenoid biosynthetic process"/>
    <property type="evidence" value="ECO:0007669"/>
    <property type="project" value="InterPro"/>
</dbReference>
<dbReference type="CDD" id="cd02892">
    <property type="entry name" value="SQCY_1"/>
    <property type="match status" value="1"/>
</dbReference>
<dbReference type="FunFam" id="1.50.10.20:FF:000003">
    <property type="entry name" value="Terpene cyclase/mutase family member"/>
    <property type="match status" value="1"/>
</dbReference>
<dbReference type="Gene3D" id="1.50.10.20">
    <property type="match status" value="2"/>
</dbReference>
<dbReference type="Gene3D" id="6.20.120.20">
    <property type="match status" value="1"/>
</dbReference>
<dbReference type="InterPro" id="IPR032696">
    <property type="entry name" value="SQ_cyclase_C"/>
</dbReference>
<dbReference type="InterPro" id="IPR032697">
    <property type="entry name" value="SQ_cyclase_N"/>
</dbReference>
<dbReference type="InterPro" id="IPR018333">
    <property type="entry name" value="Squalene_cyclase"/>
</dbReference>
<dbReference type="InterPro" id="IPR002365">
    <property type="entry name" value="Terpene_synthase_CS"/>
</dbReference>
<dbReference type="InterPro" id="IPR008930">
    <property type="entry name" value="Terpenoid_cyclase/PrenylTrfase"/>
</dbReference>
<dbReference type="NCBIfam" id="TIGR01787">
    <property type="entry name" value="squalene_cyclas"/>
    <property type="match status" value="1"/>
</dbReference>
<dbReference type="PANTHER" id="PTHR11764">
    <property type="entry name" value="TERPENE CYCLASE/MUTASE FAMILY MEMBER"/>
    <property type="match status" value="1"/>
</dbReference>
<dbReference type="PANTHER" id="PTHR11764:SF76">
    <property type="entry name" value="TERPENE CYCLASE_MUTASE FAMILY MEMBER"/>
    <property type="match status" value="1"/>
</dbReference>
<dbReference type="Pfam" id="PF13243">
    <property type="entry name" value="SQHop_cyclase_C"/>
    <property type="match status" value="1"/>
</dbReference>
<dbReference type="Pfam" id="PF13249">
    <property type="entry name" value="SQHop_cyclase_N"/>
    <property type="match status" value="1"/>
</dbReference>
<dbReference type="SFLD" id="SFLDG01016">
    <property type="entry name" value="Prenyltransferase_Like_2"/>
    <property type="match status" value="1"/>
</dbReference>
<dbReference type="SUPFAM" id="SSF48239">
    <property type="entry name" value="Terpenoid cyclases/Protein prenyltransferases"/>
    <property type="match status" value="2"/>
</dbReference>
<dbReference type="PROSITE" id="PS01074">
    <property type="entry name" value="TERPENE_SYNTHASES"/>
    <property type="match status" value="1"/>
</dbReference>
<sequence length="751" mass="86808">MTGGPIASWRTAAQGHLTPDENGDLKTDYSRWRLLDDRGRQTWHYLESDEENEKWPQSVADKHFLGLPTVTPLAPAATNRMFAIHELPELPKAKTPLQCAENGLEFFSKLQLPPGNWACEYGGPMFLLPGLIITYYVTNTPIPPEYATEIKRYLFARQHPEDGGWGLHIEAHSSVFGTCMNYVALRLIGVSEDDPRMIKARGLLHKFGGAIYGPHWAKFWLSVLGVMEWECVNPVPPELWLLPDWVPFTPWRWWIHIRQVFLPMSYLWSKKFTHPLDPLTKQLRQELYTQPYDSISFANHRNSIHAADNYYPKTWLLNLINQLLVSVWNPYFRIPALVKRAEEWTWELIRMEDENTDYAGLGPVSNPMNMVACYLHDGPDSYSVRRHRERLNDYMWMKNEGMLMNGTNGVQVWDTAFITQAIVVAGFADDPKWRPMLTKALEFLEDHQLRENVPDQEKCYRQHRKGAWPFSNKTQGYTVSDCTAEGLRSTIQLQEMHNYPRLISVERLKDSVDCLLLMQNPSGGFTEYETTRGSEKLEWLNAAEVFGGIMIGYDYPECTTASVTALSLFSRFYPDYRADEIKAAKDKAVKYIKRVQRPDGSWYGSWGICFTYAAMFALESLASVGETYETSEYARRGCEFLLSKQKEDGGWGESYLSSEKHVYVQHEKSQVVQTAWACLALMEAEYPHKEPLQKAMKLLMSRQQPNGEWLQESIEGVFNQSCMISYPNYKFYWPIRALGLYSRKFGNEELM</sequence>
<feature type="chain" id="PRO_0000454118" description="Lanosterol synthase erg7A">
    <location>
        <begin position="1"/>
        <end position="751"/>
    </location>
</feature>
<feature type="repeat" description="PFTB 1" evidence="3">
    <location>
        <begin position="147"/>
        <end position="189"/>
    </location>
</feature>
<feature type="repeat" description="PFTB 2" evidence="3">
    <location>
        <begin position="508"/>
        <end position="553"/>
    </location>
</feature>
<feature type="repeat" description="PFTB 3" evidence="3">
    <location>
        <begin position="585"/>
        <end position="625"/>
    </location>
</feature>
<feature type="repeat" description="PFTB 4" evidence="3">
    <location>
        <begin position="634"/>
        <end position="675"/>
    </location>
</feature>
<feature type="region of interest" description="Disordered" evidence="4">
    <location>
        <begin position="1"/>
        <end position="22"/>
    </location>
</feature>
<feature type="active site" description="Proton donor" evidence="2">
    <location>
        <position position="481"/>
    </location>
</feature>
<evidence type="ECO:0000250" key="1">
    <source>
        <dbReference type="UniProtKB" id="P38604"/>
    </source>
</evidence>
<evidence type="ECO:0000250" key="2">
    <source>
        <dbReference type="UniProtKB" id="P48449"/>
    </source>
</evidence>
<evidence type="ECO:0000255" key="3"/>
<evidence type="ECO:0000256" key="4">
    <source>
        <dbReference type="SAM" id="MobiDB-lite"/>
    </source>
</evidence>
<evidence type="ECO:0000303" key="5">
    <source>
    </source>
</evidence>
<evidence type="ECO:0000305" key="6"/>
<evidence type="ECO:0000305" key="7">
    <source>
    </source>
</evidence>
<evidence type="ECO:0000305" key="8">
    <source>
    </source>
</evidence>
<reference key="1">
    <citation type="journal article" date="2005" name="Nature">
        <title>Genomic sequence of the pathogenic and allergenic filamentous fungus Aspergillus fumigatus.</title>
        <authorList>
            <person name="Nierman W.C."/>
            <person name="Pain A."/>
            <person name="Anderson M.J."/>
            <person name="Wortman J.R."/>
            <person name="Kim H.S."/>
            <person name="Arroyo J."/>
            <person name="Berriman M."/>
            <person name="Abe K."/>
            <person name="Archer D.B."/>
            <person name="Bermejo C."/>
            <person name="Bennett J.W."/>
            <person name="Bowyer P."/>
            <person name="Chen D."/>
            <person name="Collins M."/>
            <person name="Coulsen R."/>
            <person name="Davies R."/>
            <person name="Dyer P.S."/>
            <person name="Farman M.L."/>
            <person name="Fedorova N."/>
            <person name="Fedorova N.D."/>
            <person name="Feldblyum T.V."/>
            <person name="Fischer R."/>
            <person name="Fosker N."/>
            <person name="Fraser A."/>
            <person name="Garcia J.L."/>
            <person name="Garcia M.J."/>
            <person name="Goble A."/>
            <person name="Goldman G.H."/>
            <person name="Gomi K."/>
            <person name="Griffith-Jones S."/>
            <person name="Gwilliam R."/>
            <person name="Haas B.J."/>
            <person name="Haas H."/>
            <person name="Harris D.E."/>
            <person name="Horiuchi H."/>
            <person name="Huang J."/>
            <person name="Humphray S."/>
            <person name="Jimenez J."/>
            <person name="Keller N."/>
            <person name="Khouri H."/>
            <person name="Kitamoto K."/>
            <person name="Kobayashi T."/>
            <person name="Konzack S."/>
            <person name="Kulkarni R."/>
            <person name="Kumagai T."/>
            <person name="Lafton A."/>
            <person name="Latge J.-P."/>
            <person name="Li W."/>
            <person name="Lord A."/>
            <person name="Lu C."/>
            <person name="Majoros W.H."/>
            <person name="May G.S."/>
            <person name="Miller B.L."/>
            <person name="Mohamoud Y."/>
            <person name="Molina M."/>
            <person name="Monod M."/>
            <person name="Mouyna I."/>
            <person name="Mulligan S."/>
            <person name="Murphy L.D."/>
            <person name="O'Neil S."/>
            <person name="Paulsen I."/>
            <person name="Penalva M.A."/>
            <person name="Pertea M."/>
            <person name="Price C."/>
            <person name="Pritchard B.L."/>
            <person name="Quail M.A."/>
            <person name="Rabbinowitsch E."/>
            <person name="Rawlins N."/>
            <person name="Rajandream M.A."/>
            <person name="Reichard U."/>
            <person name="Renauld H."/>
            <person name="Robson G.D."/>
            <person name="Rodriguez de Cordoba S."/>
            <person name="Rodriguez-Pena J.M."/>
            <person name="Ronning C.M."/>
            <person name="Rutter S."/>
            <person name="Salzberg S.L."/>
            <person name="Sanchez M."/>
            <person name="Sanchez-Ferrero J.C."/>
            <person name="Saunders D."/>
            <person name="Seeger K."/>
            <person name="Squares R."/>
            <person name="Squares S."/>
            <person name="Takeuchi M."/>
            <person name="Tekaia F."/>
            <person name="Turner G."/>
            <person name="Vazquez de Aldana C.R."/>
            <person name="Weidman J."/>
            <person name="White O."/>
            <person name="Woodward J.R."/>
            <person name="Yu J.-H."/>
            <person name="Fraser C.M."/>
            <person name="Galagan J.E."/>
            <person name="Asai K."/>
            <person name="Machida M."/>
            <person name="Hall N."/>
            <person name="Barrell B.G."/>
            <person name="Denning D.W."/>
        </authorList>
    </citation>
    <scope>NUCLEOTIDE SEQUENCE [LARGE SCALE GENOMIC DNA]</scope>
    <source>
        <strain>ATCC MYA-4609 / CBS 101355 / FGSC A1100 / Af293</strain>
    </source>
</reference>
<reference key="2">
    <citation type="journal article" date="2005" name="Med. Mycol.">
        <title>The ergosterol biosynthesis pathway, transporter genes, and azole resistance in Aspergillus fumigatus.</title>
        <authorList>
            <person name="Ferreira M.E."/>
            <person name="Colombo A.L."/>
            <person name="Paulsen I."/>
            <person name="Ren Q."/>
            <person name="Wortman J."/>
            <person name="Huang J."/>
            <person name="Goldman M.H."/>
            <person name="Goldman G.H."/>
        </authorList>
    </citation>
    <scope>IDENTIFICATION</scope>
    <scope>FUNCTION</scope>
    <scope>PATHWAY</scope>
</reference>
<reference key="3">
    <citation type="journal article" date="2008" name="Steroids">
        <title>Ergosterol biosynthesis pathway in Aspergillus fumigatus.</title>
        <authorList>
            <person name="Alcazar-Fuoli L."/>
            <person name="Mellado E."/>
            <person name="Garcia-Effron G."/>
            <person name="Lopez J.F."/>
            <person name="Grimalt J.O."/>
            <person name="Cuenca-Estrella J.M."/>
            <person name="Rodriguez-Tudela J.L."/>
        </authorList>
    </citation>
    <scope>FUNCTION</scope>
</reference>
<comment type="function">
    <text evidence="1 7 8">Lanosterol synthase; part of the third module of ergosterol biosynthesis pathway that includes the late steps of the pathway (By similarity). ERG7A and ERG7B catalyze the cyclization of (S)-2,3 oxidosqualene to lanosterol, a reaction that forms the sterol core (By similarity). The third module or late pathway involves the ergosterol synthesis itself through consecutive reactions that mainly occur in the endoplasmic reticulum (ER) membrane. Firstly, the squalene synthase erg9 catalyzes the condensation of 2 farnesyl pyrophosphate moieties to form squalene, which is the precursor of all steroids. Squalene synthase is crucial for balancing the incorporation of farnesyl diphosphate (FPP) into sterol and nonsterol isoprene synthesis. Secondly, squalene is converted into lanosterol by the consecutive action of the squalene epoxidase erg1 and the lanosterol synthase erg7. Then, the delta(24)-sterol C-methyltransferase erg6 methylates lanosterol at C-24 to produce eburicol. Eburicol is the substrate of the sterol 14-alpha demethylase encoded by cyp51A and cyp51B, to yield 4,4,24-trimethyl ergosta-8,14,24(28)-trienol. The C-14 reductase erg24 then reduces the C14=C15 double bond which leads to 4,4-dimethylfecosterol. A sequence of further demethylations at C-4, involving the C-4 demethylation complex containing the C-4 methylsterol oxidases erg25A or erg25B, the sterol-4-alpha-carboxylate 3-dehydrogenase erg26 and the 3-keto-steroid reductase erg27, leads to the production of fecosterol via 4-methylfecosterol. The C-8 sterol isomerase erg2 then catalyzes the reaction which results in unsaturation at C-7 in the B ring of sterols and thus converts fecosterol to episterol. The sterol-C5-desaturase erg3B then catalyzes the introduction of a C-5 double bond in the B ring to produce 5-dehydroepisterol. The 2 other sterol-C5-desaturases, erg3A and erg3C, seem to be less important in ergosterol biosynthesis. The C-22 sterol desaturase erg5 further converts 5-dehydroepisterol into ergosta-5,7,22,24(28)-tetraen-3beta-ol by forming the C-22(23) double bond in the sterol side chain. Finally, ergosta-5,7,22,24(28)-tetraen-3beta-ol is substrate of the C-24(28) sterol reductases erg4A and erg4B to produce ergosterol. Possible alternative sterol biosynthetic pathways might exist from fecosterol to ergosterol, depending on the activities of the erg3 isoforms (Probable) (PubMed:16110826, PubMed:18191972).</text>
</comment>
<comment type="catalytic activity">
    <reaction evidence="1">
        <text>(S)-2,3-epoxysqualene = lanosterol</text>
        <dbReference type="Rhea" id="RHEA:14621"/>
        <dbReference type="ChEBI" id="CHEBI:15441"/>
        <dbReference type="ChEBI" id="CHEBI:16521"/>
        <dbReference type="EC" id="5.4.99.7"/>
    </reaction>
    <physiologicalReaction direction="left-to-right" evidence="1">
        <dbReference type="Rhea" id="RHEA:14622"/>
    </physiologicalReaction>
</comment>
<comment type="pathway">
    <text evidence="7">Steroid metabolism; ergosterol biosynthesis.</text>
</comment>
<comment type="subcellular location">
    <subcellularLocation>
        <location evidence="1">Lipid droplet</location>
    </subcellularLocation>
    <subcellularLocation>
        <location evidence="1">Endoplasmic reticulum membrane</location>
        <topology evidence="1">Peripheral membrane protein</topology>
    </subcellularLocation>
</comment>
<comment type="miscellaneous">
    <text evidence="8">In Aspergillus, the biosynthesis pathway of the sterol precursors leading to the prevalent sterol ergosterol differs from yeast. The ring system of lanosterol in S.cerevisiae is firstly demethylised in three enzymatic steps leading to the intermediate zymosterol and secondly a methyl group is added to zymosterol by the sterol 24-C-methyltransferase to form fecosterol. In Aspergillus, lanosterol is firstly transmethylated by the sterol 24-C-methyltransferase leading to the intermediate eburicol and secondly demethylated in three steps to form fecosterol.</text>
</comment>
<comment type="similarity">
    <text evidence="6">Belongs to the terpene cyclase/mutase family.</text>
</comment>
<gene>
    <name evidence="5" type="primary">erg7A</name>
    <name type="ORF">AFUA_5G04080</name>
</gene>
<keyword id="KW-0256">Endoplasmic reticulum</keyword>
<keyword id="KW-0413">Isomerase</keyword>
<keyword id="KW-0444">Lipid biosynthesis</keyword>
<keyword id="KW-0551">Lipid droplet</keyword>
<keyword id="KW-0443">Lipid metabolism</keyword>
<keyword id="KW-0472">Membrane</keyword>
<keyword id="KW-1185">Reference proteome</keyword>
<keyword id="KW-0677">Repeat</keyword>
<keyword id="KW-0752">Steroid biosynthesis</keyword>
<keyword id="KW-0753">Steroid metabolism</keyword>
<keyword id="KW-0756">Sterol biosynthesis</keyword>
<keyword id="KW-1207">Sterol metabolism</keyword>
<proteinExistence type="inferred from homology"/>
<protein>
    <recommendedName>
        <fullName evidence="5">Lanosterol synthase erg7A</fullName>
        <ecNumber evidence="1">5.4.99.7</ecNumber>
    </recommendedName>
    <alternativeName>
        <fullName evidence="1">2,3-epoxysqualene--lanosterol cyclase erg7A</fullName>
    </alternativeName>
    <alternativeName>
        <fullName evidence="5">Ergosterol biosynthesis protein 7A</fullName>
    </alternativeName>
    <alternativeName>
        <fullName evidence="1">Oxidosqualene--lanosterol cyclase erg7A</fullName>
        <shortName evidence="1">OSC</shortName>
    </alternativeName>
</protein>
<organism>
    <name type="scientific">Aspergillus fumigatus (strain ATCC MYA-4609 / CBS 101355 / FGSC A1100 / Af293)</name>
    <name type="common">Neosartorya fumigata</name>
    <dbReference type="NCBI Taxonomy" id="330879"/>
    <lineage>
        <taxon>Eukaryota</taxon>
        <taxon>Fungi</taxon>
        <taxon>Dikarya</taxon>
        <taxon>Ascomycota</taxon>
        <taxon>Pezizomycotina</taxon>
        <taxon>Eurotiomycetes</taxon>
        <taxon>Eurotiomycetidae</taxon>
        <taxon>Eurotiales</taxon>
        <taxon>Aspergillaceae</taxon>
        <taxon>Aspergillus</taxon>
        <taxon>Aspergillus subgen. Fumigati</taxon>
    </lineage>
</organism>
<name>ERG7A_ASPFU</name>
<accession>Q4WES9</accession>